<evidence type="ECO:0000250" key="1"/>
<evidence type="ECO:0000255" key="2"/>
<evidence type="ECO:0000305" key="3"/>
<accession>C5FVJ9</accession>
<gene>
    <name type="primary">LCL2</name>
    <name type="ORF">MCYG_06752</name>
</gene>
<sequence>MLRTALLGLLFITTAKAQFQFFEQMFGGGQQHQESSSQGGNVPSDSAWYQNTYNGAQCSNYLCPGTLACVAVPHHCPCAHPQVEDKFEFGEGSAICASKGGFKAGETARKIELARKGLL</sequence>
<organism>
    <name type="scientific">Arthroderma otae (strain ATCC MYA-4605 / CBS 113480)</name>
    <name type="common">Microsporum canis</name>
    <dbReference type="NCBI Taxonomy" id="554155"/>
    <lineage>
        <taxon>Eukaryota</taxon>
        <taxon>Fungi</taxon>
        <taxon>Dikarya</taxon>
        <taxon>Ascomycota</taxon>
        <taxon>Pezizomycotina</taxon>
        <taxon>Eurotiomycetes</taxon>
        <taxon>Eurotiomycetidae</taxon>
        <taxon>Onygenales</taxon>
        <taxon>Arthrodermataceae</taxon>
        <taxon>Microsporum</taxon>
    </lineage>
</organism>
<name>LCL2_ARTOC</name>
<protein>
    <recommendedName>
        <fullName>Long chronological lifespan protein 2</fullName>
    </recommendedName>
</protein>
<feature type="signal peptide" evidence="2">
    <location>
        <begin position="1"/>
        <end position="17"/>
    </location>
</feature>
<feature type="chain" id="PRO_0000408589" description="Long chronological lifespan protein 2">
    <location>
        <begin position="18"/>
        <end position="119"/>
    </location>
</feature>
<reference key="1">
    <citation type="journal article" date="2012" name="MBio">
        <title>Comparative genome analysis of Trichophyton rubrum and related dermatophytes reveals candidate genes involved in infection.</title>
        <authorList>
            <person name="Martinez D.A."/>
            <person name="Oliver B.G."/>
            <person name="Graeser Y."/>
            <person name="Goldberg J.M."/>
            <person name="Li W."/>
            <person name="Martinez-Rossi N.M."/>
            <person name="Monod M."/>
            <person name="Shelest E."/>
            <person name="Barton R.C."/>
            <person name="Birch E."/>
            <person name="Brakhage A.A."/>
            <person name="Chen Z."/>
            <person name="Gurr S.J."/>
            <person name="Heiman D."/>
            <person name="Heitman J."/>
            <person name="Kosti I."/>
            <person name="Rossi A."/>
            <person name="Saif S."/>
            <person name="Samalova M."/>
            <person name="Saunders C.W."/>
            <person name="Shea T."/>
            <person name="Summerbell R.C."/>
            <person name="Xu J."/>
            <person name="Young S."/>
            <person name="Zeng Q."/>
            <person name="Birren B.W."/>
            <person name="Cuomo C.A."/>
            <person name="White T.C."/>
        </authorList>
    </citation>
    <scope>NUCLEOTIDE SEQUENCE [LARGE SCALE GENOMIC DNA]</scope>
    <source>
        <strain>ATCC MYA-4605 / CBS 113480</strain>
    </source>
</reference>
<keyword id="KW-1185">Reference proteome</keyword>
<keyword id="KW-0732">Signal</keyword>
<dbReference type="EMBL" id="DS995706">
    <property type="protein sequence ID" value="EEQ33933.1"/>
    <property type="molecule type" value="Genomic_DNA"/>
</dbReference>
<dbReference type="RefSeq" id="XP_002844788.1">
    <property type="nucleotide sequence ID" value="XM_002844742.1"/>
</dbReference>
<dbReference type="SMR" id="C5FVJ9"/>
<dbReference type="GeneID" id="9230945"/>
<dbReference type="VEuPathDB" id="FungiDB:MCYG_06752"/>
<dbReference type="eggNOG" id="ENOG502S416">
    <property type="taxonomic scope" value="Eukaryota"/>
</dbReference>
<dbReference type="HOGENOM" id="CLU_142363_0_0_1"/>
<dbReference type="OMA" id="DNYLCPD"/>
<dbReference type="OrthoDB" id="4173375at2759"/>
<dbReference type="Proteomes" id="UP000002035">
    <property type="component" value="Unassembled WGS sequence"/>
</dbReference>
<dbReference type="GO" id="GO:0036503">
    <property type="term" value="P:ERAD pathway"/>
    <property type="evidence" value="ECO:0007669"/>
    <property type="project" value="TreeGrafter"/>
</dbReference>
<dbReference type="CDD" id="cd23996">
    <property type="entry name" value="LCL2-like"/>
    <property type="match status" value="1"/>
</dbReference>
<dbReference type="InterPro" id="IPR034543">
    <property type="entry name" value="LCL2"/>
</dbReference>
<dbReference type="PANTHER" id="PTHR38425">
    <property type="entry name" value="LONG CHRONOLOGICAL LIFESPAN PROTEIN 2"/>
    <property type="match status" value="1"/>
</dbReference>
<dbReference type="PANTHER" id="PTHR38425:SF1">
    <property type="entry name" value="LONG CHRONOLOGICAL LIFESPAN PROTEIN 2"/>
    <property type="match status" value="1"/>
</dbReference>
<proteinExistence type="inferred from homology"/>
<comment type="function">
    <text evidence="1">Probable component of the endoplasmic reticulum-associated degradation (ERAD) pathway.</text>
</comment>
<comment type="similarity">
    <text evidence="3">Belongs to the LCL2 family.</text>
</comment>